<protein>
    <recommendedName>
        <fullName evidence="1">Small ribosomal subunit protein bS18</fullName>
    </recommendedName>
    <alternativeName>
        <fullName evidence="2">30S ribosomal protein S18</fullName>
    </alternativeName>
</protein>
<name>RS18_BDEBA</name>
<gene>
    <name evidence="1" type="primary">rpsR</name>
    <name type="ordered locus">Bd0940</name>
</gene>
<keyword id="KW-1185">Reference proteome</keyword>
<keyword id="KW-0687">Ribonucleoprotein</keyword>
<keyword id="KW-0689">Ribosomal protein</keyword>
<keyword id="KW-0694">RNA-binding</keyword>
<keyword id="KW-0699">rRNA-binding</keyword>
<dbReference type="EMBL" id="BX842648">
    <property type="protein sequence ID" value="CAE78880.1"/>
    <property type="molecule type" value="Genomic_DNA"/>
</dbReference>
<dbReference type="RefSeq" id="WP_011163482.1">
    <property type="nucleotide sequence ID" value="NC_005363.1"/>
</dbReference>
<dbReference type="SMR" id="Q6MPB8"/>
<dbReference type="STRING" id="264462.Bd0940"/>
<dbReference type="GeneID" id="93012011"/>
<dbReference type="KEGG" id="bba:Bd0940"/>
<dbReference type="eggNOG" id="COG0238">
    <property type="taxonomic scope" value="Bacteria"/>
</dbReference>
<dbReference type="HOGENOM" id="CLU_148710_2_3_7"/>
<dbReference type="Proteomes" id="UP000008080">
    <property type="component" value="Chromosome"/>
</dbReference>
<dbReference type="GO" id="GO:1990904">
    <property type="term" value="C:ribonucleoprotein complex"/>
    <property type="evidence" value="ECO:0007669"/>
    <property type="project" value="UniProtKB-KW"/>
</dbReference>
<dbReference type="GO" id="GO:0005840">
    <property type="term" value="C:ribosome"/>
    <property type="evidence" value="ECO:0007669"/>
    <property type="project" value="UniProtKB-KW"/>
</dbReference>
<dbReference type="GO" id="GO:0070181">
    <property type="term" value="F:small ribosomal subunit rRNA binding"/>
    <property type="evidence" value="ECO:0007669"/>
    <property type="project" value="TreeGrafter"/>
</dbReference>
<dbReference type="GO" id="GO:0003735">
    <property type="term" value="F:structural constituent of ribosome"/>
    <property type="evidence" value="ECO:0007669"/>
    <property type="project" value="InterPro"/>
</dbReference>
<dbReference type="GO" id="GO:0006412">
    <property type="term" value="P:translation"/>
    <property type="evidence" value="ECO:0007669"/>
    <property type="project" value="UniProtKB-UniRule"/>
</dbReference>
<dbReference type="Gene3D" id="4.10.640.10">
    <property type="entry name" value="Ribosomal protein S18"/>
    <property type="match status" value="1"/>
</dbReference>
<dbReference type="HAMAP" id="MF_00270">
    <property type="entry name" value="Ribosomal_bS18"/>
    <property type="match status" value="1"/>
</dbReference>
<dbReference type="InterPro" id="IPR001648">
    <property type="entry name" value="Ribosomal_bS18"/>
</dbReference>
<dbReference type="InterPro" id="IPR036870">
    <property type="entry name" value="Ribosomal_bS18_sf"/>
</dbReference>
<dbReference type="NCBIfam" id="TIGR00165">
    <property type="entry name" value="S18"/>
    <property type="match status" value="1"/>
</dbReference>
<dbReference type="PANTHER" id="PTHR13479">
    <property type="entry name" value="30S RIBOSOMAL PROTEIN S18"/>
    <property type="match status" value="1"/>
</dbReference>
<dbReference type="PANTHER" id="PTHR13479:SF40">
    <property type="entry name" value="SMALL RIBOSOMAL SUBUNIT PROTEIN BS18M"/>
    <property type="match status" value="1"/>
</dbReference>
<dbReference type="Pfam" id="PF01084">
    <property type="entry name" value="Ribosomal_S18"/>
    <property type="match status" value="1"/>
</dbReference>
<dbReference type="PRINTS" id="PR00974">
    <property type="entry name" value="RIBOSOMALS18"/>
</dbReference>
<dbReference type="SUPFAM" id="SSF46911">
    <property type="entry name" value="Ribosomal protein S18"/>
    <property type="match status" value="1"/>
</dbReference>
<reference key="1">
    <citation type="journal article" date="2004" name="Science">
        <title>A predator unmasked: life cycle of Bdellovibrio bacteriovorus from a genomic perspective.</title>
        <authorList>
            <person name="Rendulic S."/>
            <person name="Jagtap P."/>
            <person name="Rosinus A."/>
            <person name="Eppinger M."/>
            <person name="Baar C."/>
            <person name="Lanz C."/>
            <person name="Keller H."/>
            <person name="Lambert C."/>
            <person name="Evans K.J."/>
            <person name="Goesmann A."/>
            <person name="Meyer F."/>
            <person name="Sockett R.E."/>
            <person name="Schuster S.C."/>
        </authorList>
    </citation>
    <scope>NUCLEOTIDE SEQUENCE [LARGE SCALE GENOMIC DNA]</scope>
    <source>
        <strain>ATCC 15356 / DSM 50701 / NCIMB 9529 / HD100</strain>
    </source>
</reference>
<accession>Q6MPB8</accession>
<evidence type="ECO:0000255" key="1">
    <source>
        <dbReference type="HAMAP-Rule" id="MF_00270"/>
    </source>
</evidence>
<evidence type="ECO:0000305" key="2"/>
<organism>
    <name type="scientific">Bdellovibrio bacteriovorus (strain ATCC 15356 / DSM 50701 / NCIMB 9529 / HD100)</name>
    <dbReference type="NCBI Taxonomy" id="264462"/>
    <lineage>
        <taxon>Bacteria</taxon>
        <taxon>Pseudomonadati</taxon>
        <taxon>Bdellovibrionota</taxon>
        <taxon>Bdellovibrionia</taxon>
        <taxon>Bdellovibrionales</taxon>
        <taxon>Pseudobdellovibrionaceae</taxon>
        <taxon>Bdellovibrio</taxon>
    </lineage>
</organism>
<comment type="function">
    <text evidence="1">Binds as a heterodimer with protein bS6 to the central domain of the 16S rRNA, where it helps stabilize the platform of the 30S subunit.</text>
</comment>
<comment type="subunit">
    <text evidence="1">Part of the 30S ribosomal subunit. Forms a tight heterodimer with protein bS6.</text>
</comment>
<comment type="similarity">
    <text evidence="1">Belongs to the bacterial ribosomal protein bS18 family.</text>
</comment>
<feature type="chain" id="PRO_0000345444" description="Small ribosomal subunit protein bS18">
    <location>
        <begin position="1"/>
        <end position="89"/>
    </location>
</feature>
<sequence length="89" mass="9902">MKKTTRSKYRQEFSGDHVFDYKDPASLTRFIGDGGKITPSRISKLSVAQQKRVAAAVKKSRNLALLPSGSDSYDTFHRAEAISPVPFEI</sequence>
<proteinExistence type="inferred from homology"/>